<evidence type="ECO:0000255" key="1">
    <source>
        <dbReference type="HAMAP-Rule" id="MF_00328"/>
    </source>
</evidence>
<accession>Q8UGD7</accession>
<gene>
    <name evidence="1" type="primary">gmk</name>
    <name type="ordered locus">Atu1101</name>
    <name type="ORF">AGR_C_2038</name>
</gene>
<name>KGUA_AGRFC</name>
<proteinExistence type="inferred from homology"/>
<dbReference type="EC" id="2.7.4.8" evidence="1"/>
<dbReference type="EMBL" id="AE007869">
    <property type="protein sequence ID" value="AAK86907.1"/>
    <property type="molecule type" value="Genomic_DNA"/>
</dbReference>
<dbReference type="PIR" id="AD2712">
    <property type="entry name" value="AD2712"/>
</dbReference>
<dbReference type="PIR" id="B97494">
    <property type="entry name" value="B97494"/>
</dbReference>
<dbReference type="RefSeq" id="NP_354122.1">
    <property type="nucleotide sequence ID" value="NC_003062.2"/>
</dbReference>
<dbReference type="RefSeq" id="WP_010971396.1">
    <property type="nucleotide sequence ID" value="NC_003062.2"/>
</dbReference>
<dbReference type="SMR" id="Q8UGD7"/>
<dbReference type="STRING" id="176299.Atu1101"/>
<dbReference type="EnsemblBacteria" id="AAK86907">
    <property type="protein sequence ID" value="AAK86907"/>
    <property type="gene ID" value="Atu1101"/>
</dbReference>
<dbReference type="GeneID" id="1133139"/>
<dbReference type="KEGG" id="atu:Atu1101"/>
<dbReference type="PATRIC" id="fig|176299.10.peg.1117"/>
<dbReference type="eggNOG" id="COG0194">
    <property type="taxonomic scope" value="Bacteria"/>
</dbReference>
<dbReference type="HOGENOM" id="CLU_001715_1_0_5"/>
<dbReference type="OrthoDB" id="9808150at2"/>
<dbReference type="PhylomeDB" id="Q8UGD7"/>
<dbReference type="BioCyc" id="AGRO:ATU1101-MONOMER"/>
<dbReference type="Proteomes" id="UP000000813">
    <property type="component" value="Chromosome circular"/>
</dbReference>
<dbReference type="GO" id="GO:0005829">
    <property type="term" value="C:cytosol"/>
    <property type="evidence" value="ECO:0007669"/>
    <property type="project" value="TreeGrafter"/>
</dbReference>
<dbReference type="GO" id="GO:0005524">
    <property type="term" value="F:ATP binding"/>
    <property type="evidence" value="ECO:0007669"/>
    <property type="project" value="UniProtKB-UniRule"/>
</dbReference>
<dbReference type="GO" id="GO:0004385">
    <property type="term" value="F:guanylate kinase activity"/>
    <property type="evidence" value="ECO:0007669"/>
    <property type="project" value="UniProtKB-UniRule"/>
</dbReference>
<dbReference type="CDD" id="cd00071">
    <property type="entry name" value="GMPK"/>
    <property type="match status" value="1"/>
</dbReference>
<dbReference type="FunFam" id="3.30.63.10:FF:000005">
    <property type="entry name" value="Guanylate kinase"/>
    <property type="match status" value="1"/>
</dbReference>
<dbReference type="Gene3D" id="3.30.63.10">
    <property type="entry name" value="Guanylate Kinase phosphate binding domain"/>
    <property type="match status" value="1"/>
</dbReference>
<dbReference type="Gene3D" id="3.40.50.300">
    <property type="entry name" value="P-loop containing nucleotide triphosphate hydrolases"/>
    <property type="match status" value="1"/>
</dbReference>
<dbReference type="HAMAP" id="MF_00328">
    <property type="entry name" value="Guanylate_kinase"/>
    <property type="match status" value="1"/>
</dbReference>
<dbReference type="InterPro" id="IPR008145">
    <property type="entry name" value="GK/Ca_channel_bsu"/>
</dbReference>
<dbReference type="InterPro" id="IPR008144">
    <property type="entry name" value="Guanylate_kin-like_dom"/>
</dbReference>
<dbReference type="InterPro" id="IPR017665">
    <property type="entry name" value="Guanylate_kinase"/>
</dbReference>
<dbReference type="InterPro" id="IPR020590">
    <property type="entry name" value="Guanylate_kinase_CS"/>
</dbReference>
<dbReference type="InterPro" id="IPR027417">
    <property type="entry name" value="P-loop_NTPase"/>
</dbReference>
<dbReference type="NCBIfam" id="TIGR03263">
    <property type="entry name" value="guanyl_kin"/>
    <property type="match status" value="1"/>
</dbReference>
<dbReference type="PANTHER" id="PTHR23117:SF13">
    <property type="entry name" value="GUANYLATE KINASE"/>
    <property type="match status" value="1"/>
</dbReference>
<dbReference type="PANTHER" id="PTHR23117">
    <property type="entry name" value="GUANYLATE KINASE-RELATED"/>
    <property type="match status" value="1"/>
</dbReference>
<dbReference type="Pfam" id="PF00625">
    <property type="entry name" value="Guanylate_kin"/>
    <property type="match status" value="1"/>
</dbReference>
<dbReference type="SMART" id="SM00072">
    <property type="entry name" value="GuKc"/>
    <property type="match status" value="1"/>
</dbReference>
<dbReference type="SUPFAM" id="SSF52540">
    <property type="entry name" value="P-loop containing nucleoside triphosphate hydrolases"/>
    <property type="match status" value="1"/>
</dbReference>
<dbReference type="PROSITE" id="PS00856">
    <property type="entry name" value="GUANYLATE_KINASE_1"/>
    <property type="match status" value="1"/>
</dbReference>
<dbReference type="PROSITE" id="PS50052">
    <property type="entry name" value="GUANYLATE_KINASE_2"/>
    <property type="match status" value="1"/>
</dbReference>
<organism>
    <name type="scientific">Agrobacterium fabrum (strain C58 / ATCC 33970)</name>
    <name type="common">Agrobacterium tumefaciens (strain C58)</name>
    <dbReference type="NCBI Taxonomy" id="176299"/>
    <lineage>
        <taxon>Bacteria</taxon>
        <taxon>Pseudomonadati</taxon>
        <taxon>Pseudomonadota</taxon>
        <taxon>Alphaproteobacteria</taxon>
        <taxon>Hyphomicrobiales</taxon>
        <taxon>Rhizobiaceae</taxon>
        <taxon>Rhizobium/Agrobacterium group</taxon>
        <taxon>Agrobacterium</taxon>
        <taxon>Agrobacterium tumefaciens complex</taxon>
    </lineage>
</organism>
<comment type="function">
    <text evidence="1">Essential for recycling GMP and indirectly, cGMP.</text>
</comment>
<comment type="catalytic activity">
    <reaction evidence="1">
        <text>GMP + ATP = GDP + ADP</text>
        <dbReference type="Rhea" id="RHEA:20780"/>
        <dbReference type="ChEBI" id="CHEBI:30616"/>
        <dbReference type="ChEBI" id="CHEBI:58115"/>
        <dbReference type="ChEBI" id="CHEBI:58189"/>
        <dbReference type="ChEBI" id="CHEBI:456216"/>
        <dbReference type="EC" id="2.7.4.8"/>
    </reaction>
</comment>
<comment type="subcellular location">
    <subcellularLocation>
        <location evidence="1">Cytoplasm</location>
    </subcellularLocation>
</comment>
<comment type="similarity">
    <text evidence="1">Belongs to the guanylate kinase family.</text>
</comment>
<sequence length="220" mass="25363">MVPVNNSPVTIARRGLMLVISSPSGAGKSTIARNLLEKDKNISLSVSVTTRPRRQSEIEGIHYHFISKRDFERMRDGDELLEWAEVHGNFYGTPREPVEAAMAAGRDMLFDIDWQGAEQLQDKMKADVVSIFILPPTMTELQSRLHRRAEDSEEVIKTRLLNSRAEIEHWRDYDYVILNDDLQAAFEGIEAIVKAERVRRDRRHGMFDFVRSLLEEEPKL</sequence>
<keyword id="KW-0067">ATP-binding</keyword>
<keyword id="KW-0963">Cytoplasm</keyword>
<keyword id="KW-0418">Kinase</keyword>
<keyword id="KW-0547">Nucleotide-binding</keyword>
<keyword id="KW-1185">Reference proteome</keyword>
<keyword id="KW-0808">Transferase</keyword>
<reference key="1">
    <citation type="journal article" date="2001" name="Science">
        <title>The genome of the natural genetic engineer Agrobacterium tumefaciens C58.</title>
        <authorList>
            <person name="Wood D.W."/>
            <person name="Setubal J.C."/>
            <person name="Kaul R."/>
            <person name="Monks D.E."/>
            <person name="Kitajima J.P."/>
            <person name="Okura V.K."/>
            <person name="Zhou Y."/>
            <person name="Chen L."/>
            <person name="Wood G.E."/>
            <person name="Almeida N.F. Jr."/>
            <person name="Woo L."/>
            <person name="Chen Y."/>
            <person name="Paulsen I.T."/>
            <person name="Eisen J.A."/>
            <person name="Karp P.D."/>
            <person name="Bovee D. Sr."/>
            <person name="Chapman P."/>
            <person name="Clendenning J."/>
            <person name="Deatherage G."/>
            <person name="Gillet W."/>
            <person name="Grant C."/>
            <person name="Kutyavin T."/>
            <person name="Levy R."/>
            <person name="Li M.-J."/>
            <person name="McClelland E."/>
            <person name="Palmieri A."/>
            <person name="Raymond C."/>
            <person name="Rouse G."/>
            <person name="Saenphimmachak C."/>
            <person name="Wu Z."/>
            <person name="Romero P."/>
            <person name="Gordon D."/>
            <person name="Zhang S."/>
            <person name="Yoo H."/>
            <person name="Tao Y."/>
            <person name="Biddle P."/>
            <person name="Jung M."/>
            <person name="Krespan W."/>
            <person name="Perry M."/>
            <person name="Gordon-Kamm B."/>
            <person name="Liao L."/>
            <person name="Kim S."/>
            <person name="Hendrick C."/>
            <person name="Zhao Z.-Y."/>
            <person name="Dolan M."/>
            <person name="Chumley F."/>
            <person name="Tingey S.V."/>
            <person name="Tomb J.-F."/>
            <person name="Gordon M.P."/>
            <person name="Olson M.V."/>
            <person name="Nester E.W."/>
        </authorList>
    </citation>
    <scope>NUCLEOTIDE SEQUENCE [LARGE SCALE GENOMIC DNA]</scope>
    <source>
        <strain>C58 / ATCC 33970</strain>
    </source>
</reference>
<reference key="2">
    <citation type="journal article" date="2001" name="Science">
        <title>Genome sequence of the plant pathogen and biotechnology agent Agrobacterium tumefaciens C58.</title>
        <authorList>
            <person name="Goodner B."/>
            <person name="Hinkle G."/>
            <person name="Gattung S."/>
            <person name="Miller N."/>
            <person name="Blanchard M."/>
            <person name="Qurollo B."/>
            <person name="Goldman B.S."/>
            <person name="Cao Y."/>
            <person name="Askenazi M."/>
            <person name="Halling C."/>
            <person name="Mullin L."/>
            <person name="Houmiel K."/>
            <person name="Gordon J."/>
            <person name="Vaudin M."/>
            <person name="Iartchouk O."/>
            <person name="Epp A."/>
            <person name="Liu F."/>
            <person name="Wollam C."/>
            <person name="Allinger M."/>
            <person name="Doughty D."/>
            <person name="Scott C."/>
            <person name="Lappas C."/>
            <person name="Markelz B."/>
            <person name="Flanagan C."/>
            <person name="Crowell C."/>
            <person name="Gurson J."/>
            <person name="Lomo C."/>
            <person name="Sear C."/>
            <person name="Strub G."/>
            <person name="Cielo C."/>
            <person name="Slater S."/>
        </authorList>
    </citation>
    <scope>NUCLEOTIDE SEQUENCE [LARGE SCALE GENOMIC DNA]</scope>
    <source>
        <strain>C58 / ATCC 33970</strain>
    </source>
</reference>
<feature type="chain" id="PRO_0000170488" description="Guanylate kinase">
    <location>
        <begin position="1"/>
        <end position="220"/>
    </location>
</feature>
<feature type="domain" description="Guanylate kinase-like" evidence="1">
    <location>
        <begin position="15"/>
        <end position="194"/>
    </location>
</feature>
<feature type="binding site" evidence="1">
    <location>
        <begin position="22"/>
        <end position="29"/>
    </location>
    <ligand>
        <name>ATP</name>
        <dbReference type="ChEBI" id="CHEBI:30616"/>
    </ligand>
</feature>
<protein>
    <recommendedName>
        <fullName evidence="1">Guanylate kinase</fullName>
        <ecNumber evidence="1">2.7.4.8</ecNumber>
    </recommendedName>
    <alternativeName>
        <fullName evidence="1">GMP kinase</fullName>
    </alternativeName>
</protein>